<dbReference type="EC" id="3.1.3.-" evidence="12"/>
<dbReference type="EMBL" id="AK122293">
    <property type="protein sequence ID" value="BAC65575.1"/>
    <property type="molecule type" value="mRNA"/>
</dbReference>
<dbReference type="EMBL" id="AK049935">
    <property type="protein sequence ID" value="BAC33992.1"/>
    <property type="molecule type" value="mRNA"/>
</dbReference>
<dbReference type="EMBL" id="AK147570">
    <property type="protein sequence ID" value="BAE28000.1"/>
    <property type="molecule type" value="mRNA"/>
</dbReference>
<dbReference type="EMBL" id="AK147637">
    <property type="protein sequence ID" value="BAE28039.1"/>
    <property type="molecule type" value="mRNA"/>
</dbReference>
<dbReference type="EMBL" id="AK163657">
    <property type="protein sequence ID" value="BAE37443.1"/>
    <property type="molecule type" value="mRNA"/>
</dbReference>
<dbReference type="EMBL" id="BX323551">
    <property type="status" value="NOT_ANNOTATED_CDS"/>
    <property type="molecule type" value="Genomic_DNA"/>
</dbReference>
<dbReference type="EMBL" id="BC060734">
    <property type="protein sequence ID" value="AAH60734.1"/>
    <property type="status" value="ALT_INIT"/>
    <property type="molecule type" value="mRNA"/>
</dbReference>
<dbReference type="EMBL" id="BC064460">
    <property type="protein sequence ID" value="AAH64460.1"/>
    <property type="molecule type" value="mRNA"/>
</dbReference>
<dbReference type="CCDS" id="CCDS18395.1">
    <molecule id="Q80TZ3-2"/>
</dbReference>
<dbReference type="CCDS" id="CCDS51237.1">
    <molecule id="Q80TZ3-1"/>
</dbReference>
<dbReference type="CCDS" id="CCDS51238.1">
    <molecule id="Q80TZ3-3"/>
</dbReference>
<dbReference type="RefSeq" id="NP_001158055.1">
    <molecule id="Q80TZ3-3"/>
    <property type="nucleotide sequence ID" value="NM_001164583.2"/>
</dbReference>
<dbReference type="RefSeq" id="NP_001158056.1">
    <molecule id="Q80TZ3-1"/>
    <property type="nucleotide sequence ID" value="NM_001164584.2"/>
</dbReference>
<dbReference type="RefSeq" id="NP_001158057.1">
    <molecule id="Q80TZ3-2"/>
    <property type="nucleotide sequence ID" value="NM_001164585.2"/>
</dbReference>
<dbReference type="RefSeq" id="NP_001342109.1">
    <molecule id="Q80TZ3-2"/>
    <property type="nucleotide sequence ID" value="NM_001355180.2"/>
</dbReference>
<dbReference type="RefSeq" id="NP_940804.1">
    <molecule id="Q80TZ3-2"/>
    <property type="nucleotide sequence ID" value="NM_198412.3"/>
</dbReference>
<dbReference type="RefSeq" id="XP_017175882.1">
    <property type="nucleotide sequence ID" value="XM_017320393.1"/>
</dbReference>
<dbReference type="SMR" id="Q80TZ3"/>
<dbReference type="BioGRID" id="215514">
    <property type="interactions" value="7"/>
</dbReference>
<dbReference type="FunCoup" id="Q80TZ3">
    <property type="interactions" value="1190"/>
</dbReference>
<dbReference type="IntAct" id="Q80TZ3">
    <property type="interactions" value="5"/>
</dbReference>
<dbReference type="MINT" id="Q80TZ3"/>
<dbReference type="STRING" id="10090.ENSMUSP00000102546"/>
<dbReference type="GlyGen" id="Q80TZ3">
    <property type="glycosylation" value="5 sites, 1 N-linked glycan (1 site), 1 O-linked glycan (3 sites)"/>
</dbReference>
<dbReference type="iPTMnet" id="Q80TZ3"/>
<dbReference type="PhosphoSitePlus" id="Q80TZ3"/>
<dbReference type="SwissPalm" id="Q80TZ3"/>
<dbReference type="jPOST" id="Q80TZ3"/>
<dbReference type="PaxDb" id="10090-ENSMUSP00000044251"/>
<dbReference type="PeptideAtlas" id="Q80TZ3"/>
<dbReference type="ProteomicsDB" id="273635">
    <molecule id="Q80TZ3-1"/>
</dbReference>
<dbReference type="ProteomicsDB" id="273636">
    <molecule id="Q80TZ3-2"/>
</dbReference>
<dbReference type="ProteomicsDB" id="273637">
    <molecule id="Q80TZ3-3"/>
</dbReference>
<dbReference type="Antibodypedia" id="33368">
    <property type="antibodies" value="129 antibodies from 25 providers"/>
</dbReference>
<dbReference type="DNASU" id="72685"/>
<dbReference type="Ensembl" id="ENSMUST00000038207.12">
    <molecule id="Q80TZ3-1"/>
    <property type="protein sequence ID" value="ENSMUSP00000044251.6"/>
    <property type="gene ID" value="ENSMUSG00000028528.18"/>
</dbReference>
<dbReference type="Ensembl" id="ENSMUST00000094953.11">
    <molecule id="Q80TZ3-2"/>
    <property type="protein sequence ID" value="ENSMUSP00000092560.5"/>
    <property type="gene ID" value="ENSMUSG00000028528.18"/>
</dbReference>
<dbReference type="Ensembl" id="ENSMUST00000106929.10">
    <molecule id="Q80TZ3-2"/>
    <property type="protein sequence ID" value="ENSMUSP00000102542.4"/>
    <property type="gene ID" value="ENSMUSG00000028528.18"/>
</dbReference>
<dbReference type="Ensembl" id="ENSMUST00000106930.8">
    <molecule id="Q80TZ3-2"/>
    <property type="protein sequence ID" value="ENSMUSP00000102543.2"/>
    <property type="gene ID" value="ENSMUSG00000028528.18"/>
</dbReference>
<dbReference type="Ensembl" id="ENSMUST00000106933.2">
    <molecule id="Q80TZ3-3"/>
    <property type="protein sequence ID" value="ENSMUSP00000102546.2"/>
    <property type="gene ID" value="ENSMUSG00000028528.18"/>
</dbReference>
<dbReference type="GeneID" id="72685"/>
<dbReference type="KEGG" id="mmu:72685"/>
<dbReference type="UCSC" id="uc008tvq.2">
    <molecule id="Q80TZ3-1"/>
    <property type="organism name" value="mouse"/>
</dbReference>
<dbReference type="UCSC" id="uc008tvt.1">
    <molecule id="Q80TZ3-3"/>
    <property type="organism name" value="mouse"/>
</dbReference>
<dbReference type="AGR" id="MGI:1919935"/>
<dbReference type="CTD" id="9829"/>
<dbReference type="MGI" id="MGI:1919935">
    <property type="gene designation" value="Dnajc6"/>
</dbReference>
<dbReference type="VEuPathDB" id="HostDB:ENSMUSG00000028528"/>
<dbReference type="eggNOG" id="KOG0431">
    <property type="taxonomic scope" value="Eukaryota"/>
</dbReference>
<dbReference type="eggNOG" id="KOG2283">
    <property type="taxonomic scope" value="Eukaryota"/>
</dbReference>
<dbReference type="GeneTree" id="ENSGT00940000158755"/>
<dbReference type="HOGENOM" id="CLU_007537_1_0_1"/>
<dbReference type="InParanoid" id="Q80TZ3"/>
<dbReference type="OrthoDB" id="62684at9989"/>
<dbReference type="PhylomeDB" id="Q80TZ3"/>
<dbReference type="TreeFam" id="TF105165"/>
<dbReference type="Reactome" id="R-MMU-432720">
    <property type="pathway name" value="Lysosome Vesicle Biogenesis"/>
</dbReference>
<dbReference type="Reactome" id="R-MMU-432722">
    <property type="pathway name" value="Golgi Associated Vesicle Biogenesis"/>
</dbReference>
<dbReference type="Reactome" id="R-MMU-8856828">
    <property type="pathway name" value="Clathrin-mediated endocytosis"/>
</dbReference>
<dbReference type="BioGRID-ORCS" id="72685">
    <property type="hits" value="1 hit in 78 CRISPR screens"/>
</dbReference>
<dbReference type="CD-CODE" id="CE726F99">
    <property type="entry name" value="Postsynaptic density"/>
</dbReference>
<dbReference type="ChiTaRS" id="Dnajc6">
    <property type="organism name" value="mouse"/>
</dbReference>
<dbReference type="PRO" id="PR:Q80TZ3"/>
<dbReference type="Proteomes" id="UP000000589">
    <property type="component" value="Chromosome 4"/>
</dbReference>
<dbReference type="RNAct" id="Q80TZ3">
    <property type="molecule type" value="protein"/>
</dbReference>
<dbReference type="Bgee" id="ENSMUSG00000028528">
    <property type="expression patterns" value="Expressed in medial dorsal nucleus of thalamus and 193 other cell types or tissues"/>
</dbReference>
<dbReference type="ExpressionAtlas" id="Q80TZ3">
    <property type="expression patterns" value="baseline and differential"/>
</dbReference>
<dbReference type="GO" id="GO:0030136">
    <property type="term" value="C:clathrin-coated vesicle"/>
    <property type="evidence" value="ECO:0000250"/>
    <property type="project" value="UniProtKB"/>
</dbReference>
<dbReference type="GO" id="GO:0098894">
    <property type="term" value="C:extrinsic component of presynaptic endocytic zone membrane"/>
    <property type="evidence" value="ECO:0000314"/>
    <property type="project" value="SynGO"/>
</dbReference>
<dbReference type="GO" id="GO:0014069">
    <property type="term" value="C:postsynaptic density"/>
    <property type="evidence" value="ECO:0000314"/>
    <property type="project" value="MGI"/>
</dbReference>
<dbReference type="GO" id="GO:0045202">
    <property type="term" value="C:synapse"/>
    <property type="evidence" value="ECO:0000315"/>
    <property type="project" value="MGI"/>
</dbReference>
<dbReference type="GO" id="GO:0030276">
    <property type="term" value="F:clathrin binding"/>
    <property type="evidence" value="ECO:0000250"/>
    <property type="project" value="UniProtKB"/>
</dbReference>
<dbReference type="GO" id="GO:0032050">
    <property type="term" value="F:clathrin heavy chain binding"/>
    <property type="evidence" value="ECO:0000250"/>
    <property type="project" value="UniProtKB"/>
</dbReference>
<dbReference type="GO" id="GO:0031072">
    <property type="term" value="F:heat shock protein binding"/>
    <property type="evidence" value="ECO:0000250"/>
    <property type="project" value="UniProtKB"/>
</dbReference>
<dbReference type="GO" id="GO:0004725">
    <property type="term" value="F:protein tyrosine phosphatase activity"/>
    <property type="evidence" value="ECO:0007669"/>
    <property type="project" value="UniProtKB-EC"/>
</dbReference>
<dbReference type="GO" id="GO:0017124">
    <property type="term" value="F:SH3 domain binding"/>
    <property type="evidence" value="ECO:0007669"/>
    <property type="project" value="UniProtKB-KW"/>
</dbReference>
<dbReference type="GO" id="GO:0072318">
    <property type="term" value="P:clathrin coat disassembly"/>
    <property type="evidence" value="ECO:0000315"/>
    <property type="project" value="MGI"/>
</dbReference>
<dbReference type="GO" id="GO:0072583">
    <property type="term" value="P:clathrin-dependent endocytosis"/>
    <property type="evidence" value="ECO:0000314"/>
    <property type="project" value="UniProtKB"/>
</dbReference>
<dbReference type="GO" id="GO:0046907">
    <property type="term" value="P:intracellular transport"/>
    <property type="evidence" value="ECO:0000250"/>
    <property type="project" value="UniProtKB"/>
</dbReference>
<dbReference type="GO" id="GO:1905443">
    <property type="term" value="P:regulation of clathrin coat assembly"/>
    <property type="evidence" value="ECO:0000250"/>
    <property type="project" value="UniProtKB"/>
</dbReference>
<dbReference type="GO" id="GO:2000369">
    <property type="term" value="P:regulation of clathrin-dependent endocytosis"/>
    <property type="evidence" value="ECO:0000315"/>
    <property type="project" value="MGI"/>
</dbReference>
<dbReference type="GO" id="GO:0036465">
    <property type="term" value="P:synaptic vesicle recycling"/>
    <property type="evidence" value="ECO:0000315"/>
    <property type="project" value="UniProtKB"/>
</dbReference>
<dbReference type="GO" id="GO:0016191">
    <property type="term" value="P:synaptic vesicle uncoating"/>
    <property type="evidence" value="ECO:0000314"/>
    <property type="project" value="SynGO"/>
</dbReference>
<dbReference type="CDD" id="cd06257">
    <property type="entry name" value="DnaJ"/>
    <property type="match status" value="1"/>
</dbReference>
<dbReference type="CDD" id="cd14563">
    <property type="entry name" value="PTP_auxilin_N"/>
    <property type="match status" value="1"/>
</dbReference>
<dbReference type="FunFam" id="2.60.40.1110:FF:000001">
    <property type="entry name" value="cyclin-G-associated kinase isoform X2"/>
    <property type="match status" value="1"/>
</dbReference>
<dbReference type="FunFam" id="3.90.190.10:FF:000255">
    <property type="entry name" value="putative tyrosine-protein phosphatase auxilin"/>
    <property type="match status" value="1"/>
</dbReference>
<dbReference type="FunFam" id="1.10.287.110:FF:000002">
    <property type="entry name" value="putative tyrosine-protein phosphatase auxilin isoform X2"/>
    <property type="match status" value="1"/>
</dbReference>
<dbReference type="Gene3D" id="2.60.40.1110">
    <property type="match status" value="1"/>
</dbReference>
<dbReference type="Gene3D" id="1.10.287.110">
    <property type="entry name" value="DnaJ domain"/>
    <property type="match status" value="1"/>
</dbReference>
<dbReference type="Gene3D" id="3.90.190.10">
    <property type="entry name" value="Protein tyrosine phosphatase superfamily"/>
    <property type="match status" value="1"/>
</dbReference>
<dbReference type="InterPro" id="IPR035892">
    <property type="entry name" value="C2_domain_sf"/>
</dbReference>
<dbReference type="InterPro" id="IPR001623">
    <property type="entry name" value="DnaJ_domain"/>
</dbReference>
<dbReference type="InterPro" id="IPR036869">
    <property type="entry name" value="J_dom_sf"/>
</dbReference>
<dbReference type="InterPro" id="IPR029021">
    <property type="entry name" value="Prot-tyrosine_phosphatase-like"/>
</dbReference>
<dbReference type="InterPro" id="IPR014020">
    <property type="entry name" value="Tensin_C2-dom"/>
</dbReference>
<dbReference type="InterPro" id="IPR029023">
    <property type="entry name" value="Tensin_phosphatase"/>
</dbReference>
<dbReference type="InterPro" id="IPR000387">
    <property type="entry name" value="Tyr_Pase_dom"/>
</dbReference>
<dbReference type="PANTHER" id="PTHR23172">
    <property type="entry name" value="AUXILIN/CYCLIN G-ASSOCIATED KINASE-RELATED"/>
    <property type="match status" value="1"/>
</dbReference>
<dbReference type="PANTHER" id="PTHR23172:SF4">
    <property type="entry name" value="TYROSINE-PROTEIN PHOSPHATASE AUXILIN-RELATED"/>
    <property type="match status" value="1"/>
</dbReference>
<dbReference type="Pfam" id="PF10409">
    <property type="entry name" value="PTEN_C2"/>
    <property type="match status" value="1"/>
</dbReference>
<dbReference type="SMART" id="SM00271">
    <property type="entry name" value="DnaJ"/>
    <property type="match status" value="1"/>
</dbReference>
<dbReference type="SMART" id="SM01326">
    <property type="entry name" value="PTEN_C2"/>
    <property type="match status" value="1"/>
</dbReference>
<dbReference type="SUPFAM" id="SSF52799">
    <property type="entry name" value="(Phosphotyrosine protein) phosphatases II"/>
    <property type="match status" value="1"/>
</dbReference>
<dbReference type="SUPFAM" id="SSF49562">
    <property type="entry name" value="C2 domain (Calcium/lipid-binding domain, CaLB)"/>
    <property type="match status" value="1"/>
</dbReference>
<dbReference type="SUPFAM" id="SSF46565">
    <property type="entry name" value="Chaperone J-domain"/>
    <property type="match status" value="1"/>
</dbReference>
<dbReference type="PROSITE" id="PS51182">
    <property type="entry name" value="C2_TENSIN"/>
    <property type="match status" value="1"/>
</dbReference>
<dbReference type="PROSITE" id="PS50076">
    <property type="entry name" value="DNAJ_2"/>
    <property type="match status" value="1"/>
</dbReference>
<dbReference type="PROSITE" id="PS51181">
    <property type="entry name" value="PPASE_TENSIN"/>
    <property type="match status" value="1"/>
</dbReference>
<dbReference type="PROSITE" id="PS50056">
    <property type="entry name" value="TYR_PHOSPHATASE_2"/>
    <property type="match status" value="1"/>
</dbReference>
<proteinExistence type="evidence at protein level"/>
<feature type="chain" id="PRO_0000244517" description="Auxilin">
    <location>
        <begin position="1"/>
        <end position="938"/>
    </location>
</feature>
<feature type="repeat" description="1">
    <location>
        <begin position="61"/>
        <end position="64"/>
    </location>
</feature>
<feature type="repeat" description="2">
    <location>
        <begin position="65"/>
        <end position="68"/>
    </location>
</feature>
<feature type="repeat" description="3">
    <location>
        <begin position="69"/>
        <end position="72"/>
    </location>
</feature>
<feature type="domain" description="Phosphatase tensin-type" evidence="6">
    <location>
        <begin position="80"/>
        <end position="247"/>
    </location>
</feature>
<feature type="domain" description="C2 tensin-type" evidence="5">
    <location>
        <begin position="253"/>
        <end position="391"/>
    </location>
</feature>
<feature type="domain" description="J" evidence="4">
    <location>
        <begin position="874"/>
        <end position="938"/>
    </location>
</feature>
<feature type="region of interest" description="Disordered" evidence="7">
    <location>
        <begin position="19"/>
        <end position="41"/>
    </location>
</feature>
<feature type="region of interest" description="3 X 4 AA approximate tandem repeats">
    <location>
        <begin position="61"/>
        <end position="72"/>
    </location>
</feature>
<feature type="region of interest" description="Disordered" evidence="7">
    <location>
        <begin position="467"/>
        <end position="801"/>
    </location>
</feature>
<feature type="short sequence motif" description="SH3-binding" evidence="3">
    <location>
        <begin position="434"/>
        <end position="442"/>
    </location>
</feature>
<feature type="compositionally biased region" description="Polar residues" evidence="7">
    <location>
        <begin position="531"/>
        <end position="548"/>
    </location>
</feature>
<feature type="compositionally biased region" description="Low complexity" evidence="7">
    <location>
        <begin position="559"/>
        <end position="569"/>
    </location>
</feature>
<feature type="compositionally biased region" description="Polar residues" evidence="7">
    <location>
        <begin position="579"/>
        <end position="596"/>
    </location>
</feature>
<feature type="compositionally biased region" description="Polar residues" evidence="7">
    <location>
        <begin position="624"/>
        <end position="654"/>
    </location>
</feature>
<feature type="compositionally biased region" description="Low complexity" evidence="7">
    <location>
        <begin position="679"/>
        <end position="694"/>
    </location>
</feature>
<feature type="compositionally biased region" description="Polar residues" evidence="7">
    <location>
        <begin position="754"/>
        <end position="781"/>
    </location>
</feature>
<feature type="active site" description="Phosphocysteine intermediate" evidence="6">
    <location>
        <position position="189"/>
    </location>
</feature>
<feature type="modified residue" description="Phosphoserine" evidence="1">
    <location>
        <position position="137"/>
    </location>
</feature>
<feature type="modified residue" description="Phosphoserine" evidence="15">
    <location>
        <position position="478"/>
    </location>
</feature>
<feature type="modified residue" description="Phosphoserine" evidence="15">
    <location>
        <position position="481"/>
    </location>
</feature>
<feature type="modified residue" description="Phosphoserine" evidence="15">
    <location>
        <position position="595"/>
    </location>
</feature>
<feature type="splice variant" id="VSP_019582" description="In isoform 2." evidence="9 10">
    <location>
        <begin position="1"/>
        <end position="38"/>
    </location>
</feature>
<feature type="splice variant" id="VSP_019583" description="In isoform 3." evidence="9">
    <original>MTNPKSGVAESAGLACSRAAAGENRMKDSENK</original>
    <variation>MSLLGSYRKKTSSDGYESLQLVDSHGDSSARGAAAGTQRATAGAVRSPARQPPHRASTTDSS</variation>
    <location>
        <begin position="1"/>
        <end position="32"/>
    </location>
</feature>
<feature type="sequence conflict" description="In Ref. 1; BAC65575." evidence="12" ref="1">
    <original>P</original>
    <variation>T</variation>
    <location>
        <position position="442"/>
    </location>
</feature>
<sequence>MTNPKSGVAESAGLACSRAAAGENRMKDSENKGASSPDMEPSYGGGLFDMVKGGAGRLFSNLKDNLKDTLKDTSSRVIQSVSSYTKGDLDFTYVTSRIIVMSFPVDSVDIGFRNQVDDIRSFLDSRHLDHYTVYNLSPKSYRTAKFHSRVSECSWPIRQAPSLHNLFAVCRNMYNWLLQNPKNVCVVHCLDGRAASSILVGAMFIFCNLYSTPGPAVRLLYAKRPGIGLSPSHRRYLGYMCDLLADKPYRPHFKPLTIKAITVSPVPFFNKQRNGCRPYCDVLIGETKIYSTCTDFERMKEYRVQDGKIFIPLNITVQGDVIVSMYHLRSTIGSRLQAKVTNTQIFQLQFHSGFIPLDTTVLKFTKPELDACDVPEKYPQLFQVTLDIEVQPQDKVIDLTPPWEHYCTKDVNPSILFSSQQEHQDTLALGGQAPADLPPDHPRNLGQGGFFASLCWQDQKSEKSRCEEDHAALVNQESEQSDDELLTLSSPHGNAEGDKPHGAKKPGKKQQEPAAPPPPEEVDLLGLEGSDVSTNFSSLAAPPSNSELLSDLFGGVGATGPAQAGQAGVEDVFHPSGPVSAQSTPRRTATSASASPTLRVGEGATFDPFGAPAKPPGQDLLGSFLNTSSASSDPFLQPTRSPSPTVHASSTPAVNIQPDIAGGWDWHTKPGGFGMGSKSAATSPTGSSHGTPTHQSKPQTLDPFADLGTLGSSSFASKPTTPTGLGGGFPPLSSPQKASPQPMGGGWQQPAGYNWQQTQSKPQSSMPHSSPQNRPNYNVSFSAMPAGQSERGKGSTNLEGKQKAADFEDLLSSQGFNAHKDKKGPRTIAEMRKEEMAKEMDPEKLKILEWIEGKERNIRALLSTMHTVLWAGETKWKPVGMADLVTPEQVKKVYRRAVLVVHPDKATGQPYEQYAKMIFMELNDAWSEFENQGQKPLY</sequence>
<keyword id="KW-0025">Alternative splicing</keyword>
<keyword id="KW-0143">Chaperone</keyword>
<keyword id="KW-0968">Cytoplasmic vesicle</keyword>
<keyword id="KW-0378">Hydrolase</keyword>
<keyword id="KW-0597">Phosphoprotein</keyword>
<keyword id="KW-0904">Protein phosphatase</keyword>
<keyword id="KW-1185">Reference proteome</keyword>
<keyword id="KW-0677">Repeat</keyword>
<keyword id="KW-0729">SH3-binding</keyword>
<organism>
    <name type="scientific">Mus musculus</name>
    <name type="common">Mouse</name>
    <dbReference type="NCBI Taxonomy" id="10090"/>
    <lineage>
        <taxon>Eukaryota</taxon>
        <taxon>Metazoa</taxon>
        <taxon>Chordata</taxon>
        <taxon>Craniata</taxon>
        <taxon>Vertebrata</taxon>
        <taxon>Euteleostomi</taxon>
        <taxon>Mammalia</taxon>
        <taxon>Eutheria</taxon>
        <taxon>Euarchontoglires</taxon>
        <taxon>Glires</taxon>
        <taxon>Rodentia</taxon>
        <taxon>Myomorpha</taxon>
        <taxon>Muroidea</taxon>
        <taxon>Muridae</taxon>
        <taxon>Murinae</taxon>
        <taxon>Mus</taxon>
        <taxon>Mus</taxon>
    </lineage>
</organism>
<gene>
    <name evidence="14" type="primary">Dnajc6</name>
    <name evidence="13" type="synonym">Kiaa0473</name>
</gene>
<comment type="function">
    <text evidence="2 8">May act as a protein phosphatase and/or a lipid phosphatase. Co-chaperone that recruits HSPA8/HSC70 to clathrin-coated vesicles (CCVs) and promotes the ATP-dependent dissociation of clathrin from CCVs and participates in clathrin-mediated endocytosis of synaptic vesicles and their recycling and also in intracellular trafficking (PubMed:20160091). Firstly, binds tightly to the clathrin cages, at a ratio of one DNAJC6 per clathrin triskelion. The HSPA8:ATP complex then binds to the clathrin-auxilin cage, initially at a ratio of one HSPA8 per triskelion leading to ATP hydrolysis stimulation and causing a conformational change in the HSPA8. This cycle is repeated three times to drive to a complex containing the clathrin-auxilin cage associated to three HSPA8:ADP complex. The ATP hydrolysis of the third HSPA8:ATP complex leads to a concerted dismantling of the cage into component triskelia. Then, dissociates from the released triskelia and be recycled to initiate another cycle of HSPA8's recruitment. Also acts during the early steps of clathrin-coated vesicle (CCV) formation through its interaction with the GTP bound form of DNM1 (By similarity).</text>
</comment>
<comment type="subunit">
    <text evidence="2">Forms a complex composed of HSPA8, CLTC and DNAJC6. Interacts with HSPA8/HSC70 in an ATP-dependent manner; this interaction stimulates the HSPA8's ATPase activity. Interacts with CLTC; this interaction produces a local change in heavy-chain contacts, creating a detectable global distortion of the clathrin coat. Interacts with AP2A2. Interacts with DNM1(GTP-bound form); this interaction allows clathrin-coated vesicle (CCV) formation at the plasma membrane.</text>
</comment>
<comment type="subcellular location">
    <subcellularLocation>
        <location evidence="2">Cytoplasmic vesicle</location>
        <location evidence="2">Clathrin-coated vesicle</location>
    </subcellularLocation>
    <text evidence="2">Appears on coated vesicles in successive transient bursts, immediately after the vesicle release from the plasma membrane. Recruitment to clathrin-coated vesicles depends on temporal variations in phosphoinositide composition of clathrin-coated vesicles.</text>
</comment>
<comment type="alternative products">
    <event type="alternative splicing"/>
    <isoform>
        <id>Q80TZ3-1</id>
        <name>1</name>
        <sequence type="displayed"/>
    </isoform>
    <isoform>
        <id>Q80TZ3-2</id>
        <name>2</name>
        <sequence type="described" ref="VSP_019582"/>
    </isoform>
    <isoform>
        <id>Q80TZ3-3</id>
        <name>3</name>
        <sequence type="described" ref="VSP_019583"/>
    </isoform>
</comment>
<comment type="domain">
    <text evidence="2">The J domain mediates interaction with HSPA8/HSC70 and is required for basket dissociation.</text>
</comment>
<comment type="PTM">
    <text evidence="2">The N-terminus is blocked.</text>
</comment>
<comment type="PTM">
    <text evidence="1">Phosphorylation at Ser-595 modulates its ability to bind CLTC and therefore the synaptic vesicle endocytosis (SVE).</text>
</comment>
<comment type="disruption phenotype">
    <text evidence="8">Mice have a high rate of early postnatal mortality, although surviving pups have a normal life span despite decreased body weight. Knockout animals have impaired synaptic vesicle recycling, with an increased number of clathrin-coated vesicles, and impaired clathrin-mediated endocytosis of synaptic vesicles in neuronal culture. There is an up-regulation of Gak, but this does not fully compensate for the lack of the protein. The brains from mutant mice do not display alterations in substantia nigra morphology or dopamine transporter abundance or distribution, in agreement with the lack of gait or movement abnormalities in the mutant animals.</text>
</comment>
<comment type="sequence caution" evidence="12">
    <conflict type="erroneous initiation">
        <sequence resource="EMBL-CDS" id="AAH60734"/>
    </conflict>
    <text>Extended N-terminus.</text>
</comment>
<accession>Q80TZ3</accession>
<accession>B1B0B9</accession>
<accession>Q6P2K9</accession>
<accession>Q8C7L9</accession>
<evidence type="ECO:0000250" key="1">
    <source>
        <dbReference type="UniProtKB" id="O75061"/>
    </source>
</evidence>
<evidence type="ECO:0000250" key="2">
    <source>
        <dbReference type="UniProtKB" id="Q27974"/>
    </source>
</evidence>
<evidence type="ECO:0000255" key="3"/>
<evidence type="ECO:0000255" key="4">
    <source>
        <dbReference type="PROSITE-ProRule" id="PRU00286"/>
    </source>
</evidence>
<evidence type="ECO:0000255" key="5">
    <source>
        <dbReference type="PROSITE-ProRule" id="PRU00589"/>
    </source>
</evidence>
<evidence type="ECO:0000255" key="6">
    <source>
        <dbReference type="PROSITE-ProRule" id="PRU00590"/>
    </source>
</evidence>
<evidence type="ECO:0000256" key="7">
    <source>
        <dbReference type="SAM" id="MobiDB-lite"/>
    </source>
</evidence>
<evidence type="ECO:0000269" key="8">
    <source>
    </source>
</evidence>
<evidence type="ECO:0000303" key="9">
    <source>
    </source>
</evidence>
<evidence type="ECO:0000303" key="10">
    <source>
    </source>
</evidence>
<evidence type="ECO:0000303" key="11">
    <source>
    </source>
</evidence>
<evidence type="ECO:0000305" key="12"/>
<evidence type="ECO:0000312" key="13">
    <source>
        <dbReference type="EMBL" id="BAC65575.1"/>
    </source>
</evidence>
<evidence type="ECO:0000312" key="14">
    <source>
        <dbReference type="MGI" id="MGI:1919935"/>
    </source>
</evidence>
<evidence type="ECO:0007744" key="15">
    <source>
    </source>
</evidence>
<reference key="1">
    <citation type="journal article" date="2003" name="DNA Res.">
        <title>Prediction of the coding sequences of mouse homologues of KIAA gene: II. The complete nucleotide sequences of 400 mouse KIAA-homologous cDNAs identified by screening of terminal sequences of cDNA clones randomly sampled from size-fractionated libraries.</title>
        <authorList>
            <person name="Okazaki N."/>
            <person name="Kikuno R."/>
            <person name="Ohara R."/>
            <person name="Inamoto S."/>
            <person name="Aizawa H."/>
            <person name="Yuasa S."/>
            <person name="Nakajima D."/>
            <person name="Nagase T."/>
            <person name="Ohara O."/>
            <person name="Koga H."/>
        </authorList>
    </citation>
    <scope>NUCLEOTIDE SEQUENCE [LARGE SCALE MRNA] (ISOFORM 1)</scope>
    <source>
        <tissue>Brain</tissue>
    </source>
</reference>
<reference key="2">
    <citation type="journal article" date="2005" name="Science">
        <title>The transcriptional landscape of the mammalian genome.</title>
        <authorList>
            <person name="Carninci P."/>
            <person name="Kasukawa T."/>
            <person name="Katayama S."/>
            <person name="Gough J."/>
            <person name="Frith M.C."/>
            <person name="Maeda N."/>
            <person name="Oyama R."/>
            <person name="Ravasi T."/>
            <person name="Lenhard B."/>
            <person name="Wells C."/>
            <person name="Kodzius R."/>
            <person name="Shimokawa K."/>
            <person name="Bajic V.B."/>
            <person name="Brenner S.E."/>
            <person name="Batalov S."/>
            <person name="Forrest A.R."/>
            <person name="Zavolan M."/>
            <person name="Davis M.J."/>
            <person name="Wilming L.G."/>
            <person name="Aidinis V."/>
            <person name="Allen J.E."/>
            <person name="Ambesi-Impiombato A."/>
            <person name="Apweiler R."/>
            <person name="Aturaliya R.N."/>
            <person name="Bailey T.L."/>
            <person name="Bansal M."/>
            <person name="Baxter L."/>
            <person name="Beisel K.W."/>
            <person name="Bersano T."/>
            <person name="Bono H."/>
            <person name="Chalk A.M."/>
            <person name="Chiu K.P."/>
            <person name="Choudhary V."/>
            <person name="Christoffels A."/>
            <person name="Clutterbuck D.R."/>
            <person name="Crowe M.L."/>
            <person name="Dalla E."/>
            <person name="Dalrymple B.P."/>
            <person name="de Bono B."/>
            <person name="Della Gatta G."/>
            <person name="di Bernardo D."/>
            <person name="Down T."/>
            <person name="Engstrom P."/>
            <person name="Fagiolini M."/>
            <person name="Faulkner G."/>
            <person name="Fletcher C.F."/>
            <person name="Fukushima T."/>
            <person name="Furuno M."/>
            <person name="Futaki S."/>
            <person name="Gariboldi M."/>
            <person name="Georgii-Hemming P."/>
            <person name="Gingeras T.R."/>
            <person name="Gojobori T."/>
            <person name="Green R.E."/>
            <person name="Gustincich S."/>
            <person name="Harbers M."/>
            <person name="Hayashi Y."/>
            <person name="Hensch T.K."/>
            <person name="Hirokawa N."/>
            <person name="Hill D."/>
            <person name="Huminiecki L."/>
            <person name="Iacono M."/>
            <person name="Ikeo K."/>
            <person name="Iwama A."/>
            <person name="Ishikawa T."/>
            <person name="Jakt M."/>
            <person name="Kanapin A."/>
            <person name="Katoh M."/>
            <person name="Kawasawa Y."/>
            <person name="Kelso J."/>
            <person name="Kitamura H."/>
            <person name="Kitano H."/>
            <person name="Kollias G."/>
            <person name="Krishnan S.P."/>
            <person name="Kruger A."/>
            <person name="Kummerfeld S.K."/>
            <person name="Kurochkin I.V."/>
            <person name="Lareau L.F."/>
            <person name="Lazarevic D."/>
            <person name="Lipovich L."/>
            <person name="Liu J."/>
            <person name="Liuni S."/>
            <person name="McWilliam S."/>
            <person name="Madan Babu M."/>
            <person name="Madera M."/>
            <person name="Marchionni L."/>
            <person name="Matsuda H."/>
            <person name="Matsuzawa S."/>
            <person name="Miki H."/>
            <person name="Mignone F."/>
            <person name="Miyake S."/>
            <person name="Morris K."/>
            <person name="Mottagui-Tabar S."/>
            <person name="Mulder N."/>
            <person name="Nakano N."/>
            <person name="Nakauchi H."/>
            <person name="Ng P."/>
            <person name="Nilsson R."/>
            <person name="Nishiguchi S."/>
            <person name="Nishikawa S."/>
            <person name="Nori F."/>
            <person name="Ohara O."/>
            <person name="Okazaki Y."/>
            <person name="Orlando V."/>
            <person name="Pang K.C."/>
            <person name="Pavan W.J."/>
            <person name="Pavesi G."/>
            <person name="Pesole G."/>
            <person name="Petrovsky N."/>
            <person name="Piazza S."/>
            <person name="Reed J."/>
            <person name="Reid J.F."/>
            <person name="Ring B.Z."/>
            <person name="Ringwald M."/>
            <person name="Rost B."/>
            <person name="Ruan Y."/>
            <person name="Salzberg S.L."/>
            <person name="Sandelin A."/>
            <person name="Schneider C."/>
            <person name="Schoenbach C."/>
            <person name="Sekiguchi K."/>
            <person name="Semple C.A."/>
            <person name="Seno S."/>
            <person name="Sessa L."/>
            <person name="Sheng Y."/>
            <person name="Shibata Y."/>
            <person name="Shimada H."/>
            <person name="Shimada K."/>
            <person name="Silva D."/>
            <person name="Sinclair B."/>
            <person name="Sperling S."/>
            <person name="Stupka E."/>
            <person name="Sugiura K."/>
            <person name="Sultana R."/>
            <person name="Takenaka Y."/>
            <person name="Taki K."/>
            <person name="Tammoja K."/>
            <person name="Tan S.L."/>
            <person name="Tang S."/>
            <person name="Taylor M.S."/>
            <person name="Tegner J."/>
            <person name="Teichmann S.A."/>
            <person name="Ueda H.R."/>
            <person name="van Nimwegen E."/>
            <person name="Verardo R."/>
            <person name="Wei C.L."/>
            <person name="Yagi K."/>
            <person name="Yamanishi H."/>
            <person name="Zabarovsky E."/>
            <person name="Zhu S."/>
            <person name="Zimmer A."/>
            <person name="Hide W."/>
            <person name="Bult C."/>
            <person name="Grimmond S.M."/>
            <person name="Teasdale R.D."/>
            <person name="Liu E.T."/>
            <person name="Brusic V."/>
            <person name="Quackenbush J."/>
            <person name="Wahlestedt C."/>
            <person name="Mattick J.S."/>
            <person name="Hume D.A."/>
            <person name="Kai C."/>
            <person name="Sasaki D."/>
            <person name="Tomaru Y."/>
            <person name="Fukuda S."/>
            <person name="Kanamori-Katayama M."/>
            <person name="Suzuki M."/>
            <person name="Aoki J."/>
            <person name="Arakawa T."/>
            <person name="Iida J."/>
            <person name="Imamura K."/>
            <person name="Itoh M."/>
            <person name="Kato T."/>
            <person name="Kawaji H."/>
            <person name="Kawagashira N."/>
            <person name="Kawashima T."/>
            <person name="Kojima M."/>
            <person name="Kondo S."/>
            <person name="Konno H."/>
            <person name="Nakano K."/>
            <person name="Ninomiya N."/>
            <person name="Nishio T."/>
            <person name="Okada M."/>
            <person name="Plessy C."/>
            <person name="Shibata K."/>
            <person name="Shiraki T."/>
            <person name="Suzuki S."/>
            <person name="Tagami M."/>
            <person name="Waki K."/>
            <person name="Watahiki A."/>
            <person name="Okamura-Oho Y."/>
            <person name="Suzuki H."/>
            <person name="Kawai J."/>
            <person name="Hayashizaki Y."/>
        </authorList>
    </citation>
    <scope>NUCLEOTIDE SEQUENCE [LARGE SCALE MRNA] (ISOFORM 2)</scope>
    <source>
        <strain>C57BL/6J</strain>
        <tissue>Brain</tissue>
        <tissue>Hippocampus</tissue>
        <tissue>Medulla oblongata</tissue>
    </source>
</reference>
<reference key="3">
    <citation type="journal article" date="2009" name="PLoS Biol.">
        <title>Lineage-specific biology revealed by a finished genome assembly of the mouse.</title>
        <authorList>
            <person name="Church D.M."/>
            <person name="Goodstadt L."/>
            <person name="Hillier L.W."/>
            <person name="Zody M.C."/>
            <person name="Goldstein S."/>
            <person name="She X."/>
            <person name="Bult C.J."/>
            <person name="Agarwala R."/>
            <person name="Cherry J.L."/>
            <person name="DiCuccio M."/>
            <person name="Hlavina W."/>
            <person name="Kapustin Y."/>
            <person name="Meric P."/>
            <person name="Maglott D."/>
            <person name="Birtle Z."/>
            <person name="Marques A.C."/>
            <person name="Graves T."/>
            <person name="Zhou S."/>
            <person name="Teague B."/>
            <person name="Potamousis K."/>
            <person name="Churas C."/>
            <person name="Place M."/>
            <person name="Herschleb J."/>
            <person name="Runnheim R."/>
            <person name="Forrest D."/>
            <person name="Amos-Landgraf J."/>
            <person name="Schwartz D.C."/>
            <person name="Cheng Z."/>
            <person name="Lindblad-Toh K."/>
            <person name="Eichler E.E."/>
            <person name="Ponting C.P."/>
        </authorList>
    </citation>
    <scope>NUCLEOTIDE SEQUENCE [LARGE SCALE GENOMIC DNA]</scope>
    <source>
        <strain>C57BL/6J</strain>
    </source>
</reference>
<reference key="4">
    <citation type="journal article" date="2004" name="Genome Res.">
        <title>The status, quality, and expansion of the NIH full-length cDNA project: the Mammalian Gene Collection (MGC).</title>
        <authorList>
            <consortium name="The MGC Project Team"/>
        </authorList>
    </citation>
    <scope>NUCLEOTIDE SEQUENCE [LARGE SCALE MRNA] (ISOFORMS 2 AND 3)</scope>
    <source>
        <strain>C57BL/6J</strain>
        <tissue>Brain</tissue>
    </source>
</reference>
<reference key="5">
    <citation type="journal article" date="2010" name="Cell">
        <title>A tissue-specific atlas of mouse protein phosphorylation and expression.</title>
        <authorList>
            <person name="Huttlin E.L."/>
            <person name="Jedrychowski M.P."/>
            <person name="Elias J.E."/>
            <person name="Goswami T."/>
            <person name="Rad R."/>
            <person name="Beausoleil S.A."/>
            <person name="Villen J."/>
            <person name="Haas W."/>
            <person name="Sowa M.E."/>
            <person name="Gygi S.P."/>
        </authorList>
    </citation>
    <scope>PHOSPHORYLATION [LARGE SCALE ANALYSIS] AT SER-478; SER-481 AND SER-595</scope>
    <scope>IDENTIFICATION BY MASS SPECTROMETRY [LARGE SCALE ANALYSIS]</scope>
    <source>
        <tissue>Brain</tissue>
        <tissue>Kidney</tissue>
        <tissue>Lung</tissue>
        <tissue>Pancreas</tissue>
        <tissue>Spleen</tissue>
    </source>
</reference>
<reference key="6">
    <citation type="journal article" date="2010" name="Proc. Natl. Acad. Sci. U.S.A.">
        <title>Endocytosis and clathrin-uncoating defects at synapses of auxilin knockout mice.</title>
        <authorList>
            <person name="Yim Y.I."/>
            <person name="Sun T."/>
            <person name="Wu L.G."/>
            <person name="Raimondi A."/>
            <person name="De Camilli P."/>
            <person name="Eisenberg E."/>
            <person name="Greene L.E."/>
        </authorList>
    </citation>
    <scope>DISRUPTION PHENOTYPE</scope>
    <scope>FUNCTION</scope>
</reference>
<name>AUXI_MOUSE</name>
<protein>
    <recommendedName>
        <fullName evidence="11">Auxilin</fullName>
        <ecNumber evidence="12">3.1.3.-</ecNumber>
    </recommendedName>
    <alternativeName>
        <fullName evidence="14">DnaJ homolog subfamily C member 6</fullName>
    </alternativeName>
</protein>